<dbReference type="EMBL" id="BA000002">
    <property type="protein sequence ID" value="BAA81096.2"/>
    <property type="molecule type" value="Genomic_DNA"/>
</dbReference>
<dbReference type="PIR" id="H72513">
    <property type="entry name" value="H72513"/>
</dbReference>
<dbReference type="RefSeq" id="WP_010866784.1">
    <property type="nucleotide sequence ID" value="NC_000854.2"/>
</dbReference>
<dbReference type="SMR" id="Q9YA53"/>
<dbReference type="STRING" id="272557.APE_2085.1"/>
<dbReference type="EnsemblBacteria" id="BAA81096">
    <property type="protein sequence ID" value="BAA81096"/>
    <property type="gene ID" value="APE_2085.1"/>
</dbReference>
<dbReference type="GeneID" id="1445181"/>
<dbReference type="KEGG" id="ape:APE_2085.1"/>
<dbReference type="PATRIC" id="fig|272557.25.peg.1389"/>
<dbReference type="eggNOG" id="arCOG04277">
    <property type="taxonomic scope" value="Archaea"/>
</dbReference>
<dbReference type="Proteomes" id="UP000002518">
    <property type="component" value="Chromosome"/>
</dbReference>
<dbReference type="GO" id="GO:0005737">
    <property type="term" value="C:cytoplasm"/>
    <property type="evidence" value="ECO:0007669"/>
    <property type="project" value="UniProtKB-SubCell"/>
</dbReference>
<dbReference type="GO" id="GO:0043022">
    <property type="term" value="F:ribosome binding"/>
    <property type="evidence" value="ECO:0007669"/>
    <property type="project" value="InterPro"/>
</dbReference>
<dbReference type="GO" id="GO:0003723">
    <property type="term" value="F:RNA binding"/>
    <property type="evidence" value="ECO:0007669"/>
    <property type="project" value="InterPro"/>
</dbReference>
<dbReference type="GO" id="GO:0003746">
    <property type="term" value="F:translation elongation factor activity"/>
    <property type="evidence" value="ECO:0007669"/>
    <property type="project" value="InterPro"/>
</dbReference>
<dbReference type="GO" id="GO:0003743">
    <property type="term" value="F:translation initiation factor activity"/>
    <property type="evidence" value="ECO:0007669"/>
    <property type="project" value="UniProtKB-UniRule"/>
</dbReference>
<dbReference type="GO" id="GO:0045901">
    <property type="term" value="P:positive regulation of translational elongation"/>
    <property type="evidence" value="ECO:0007669"/>
    <property type="project" value="InterPro"/>
</dbReference>
<dbReference type="GO" id="GO:0045905">
    <property type="term" value="P:positive regulation of translational termination"/>
    <property type="evidence" value="ECO:0007669"/>
    <property type="project" value="InterPro"/>
</dbReference>
<dbReference type="CDD" id="cd04467">
    <property type="entry name" value="S1_aIF5A"/>
    <property type="match status" value="1"/>
</dbReference>
<dbReference type="FunFam" id="2.40.50.140:FF:000334">
    <property type="entry name" value="Translation initiation factor 5A"/>
    <property type="match status" value="1"/>
</dbReference>
<dbReference type="Gene3D" id="2.30.30.30">
    <property type="match status" value="1"/>
</dbReference>
<dbReference type="Gene3D" id="2.40.50.140">
    <property type="entry name" value="Nucleic acid-binding proteins"/>
    <property type="match status" value="1"/>
</dbReference>
<dbReference type="HAMAP" id="MF_00085">
    <property type="entry name" value="eIF_5A"/>
    <property type="match status" value="1"/>
</dbReference>
<dbReference type="InterPro" id="IPR001884">
    <property type="entry name" value="IF5A-like"/>
</dbReference>
<dbReference type="InterPro" id="IPR048670">
    <property type="entry name" value="IF5A-like_N"/>
</dbReference>
<dbReference type="InterPro" id="IPR012340">
    <property type="entry name" value="NA-bd_OB-fold"/>
</dbReference>
<dbReference type="InterPro" id="IPR014722">
    <property type="entry name" value="Rib_uL2_dom2"/>
</dbReference>
<dbReference type="InterPro" id="IPR019769">
    <property type="entry name" value="Trans_elong_IF5A_hypusine_site"/>
</dbReference>
<dbReference type="InterPro" id="IPR022847">
    <property type="entry name" value="Transl_elong_IF5A_arc"/>
</dbReference>
<dbReference type="InterPro" id="IPR020189">
    <property type="entry name" value="Transl_elong_IF5A_C"/>
</dbReference>
<dbReference type="InterPro" id="IPR008991">
    <property type="entry name" value="Translation_prot_SH3-like_sf"/>
</dbReference>
<dbReference type="NCBIfam" id="TIGR00037">
    <property type="entry name" value="eIF_5A"/>
    <property type="match status" value="1"/>
</dbReference>
<dbReference type="NCBIfam" id="NF003076">
    <property type="entry name" value="PRK03999.1"/>
    <property type="match status" value="1"/>
</dbReference>
<dbReference type="PANTHER" id="PTHR11673">
    <property type="entry name" value="TRANSLATION INITIATION FACTOR 5A FAMILY MEMBER"/>
    <property type="match status" value="1"/>
</dbReference>
<dbReference type="Pfam" id="PF01287">
    <property type="entry name" value="eIF-5a"/>
    <property type="match status" value="1"/>
</dbReference>
<dbReference type="Pfam" id="PF21485">
    <property type="entry name" value="IF5A-like_N"/>
    <property type="match status" value="1"/>
</dbReference>
<dbReference type="PIRSF" id="PIRSF003025">
    <property type="entry name" value="eIF5A"/>
    <property type="match status" value="1"/>
</dbReference>
<dbReference type="SMART" id="SM01376">
    <property type="entry name" value="eIF-5a"/>
    <property type="match status" value="1"/>
</dbReference>
<dbReference type="SUPFAM" id="SSF50249">
    <property type="entry name" value="Nucleic acid-binding proteins"/>
    <property type="match status" value="1"/>
</dbReference>
<dbReference type="SUPFAM" id="SSF50104">
    <property type="entry name" value="Translation proteins SH3-like domain"/>
    <property type="match status" value="1"/>
</dbReference>
<dbReference type="PROSITE" id="PS00302">
    <property type="entry name" value="IF5A_HYPUSINE"/>
    <property type="match status" value="1"/>
</dbReference>
<evidence type="ECO:0000250" key="1"/>
<evidence type="ECO:0000305" key="2"/>
<comment type="function">
    <text evidence="1">Functions by promoting the formation of the first peptide bond.</text>
</comment>
<comment type="subcellular location">
    <subcellularLocation>
        <location evidence="1">Cytoplasm</location>
    </subcellularLocation>
</comment>
<comment type="similarity">
    <text evidence="2">Belongs to the eIF-5A family.</text>
</comment>
<accession>Q9YA53</accession>
<proteinExistence type="inferred from homology"/>
<feature type="chain" id="PRO_0000142489" description="Translation initiation factor 5A">
    <location>
        <begin position="1"/>
        <end position="139"/>
    </location>
</feature>
<feature type="modified residue" description="Hypusine" evidence="1">
    <location>
        <position position="36"/>
    </location>
</feature>
<organism>
    <name type="scientific">Aeropyrum pernix (strain ATCC 700893 / DSM 11879 / JCM 9820 / NBRC 100138 / K1)</name>
    <dbReference type="NCBI Taxonomy" id="272557"/>
    <lineage>
        <taxon>Archaea</taxon>
        <taxon>Thermoproteota</taxon>
        <taxon>Thermoprotei</taxon>
        <taxon>Desulfurococcales</taxon>
        <taxon>Desulfurococcaceae</taxon>
        <taxon>Aeropyrum</taxon>
    </lineage>
</organism>
<keyword id="KW-0963">Cytoplasm</keyword>
<keyword id="KW-0385">Hypusine</keyword>
<keyword id="KW-0396">Initiation factor</keyword>
<keyword id="KW-0648">Protein biosynthesis</keyword>
<keyword id="KW-1185">Reference proteome</keyword>
<reference key="1">
    <citation type="journal article" date="1999" name="DNA Res.">
        <title>Complete genome sequence of an aerobic hyper-thermophilic crenarchaeon, Aeropyrum pernix K1.</title>
        <authorList>
            <person name="Kawarabayasi Y."/>
            <person name="Hino Y."/>
            <person name="Horikawa H."/>
            <person name="Yamazaki S."/>
            <person name="Haikawa Y."/>
            <person name="Jin-no K."/>
            <person name="Takahashi M."/>
            <person name="Sekine M."/>
            <person name="Baba S."/>
            <person name="Ankai A."/>
            <person name="Kosugi H."/>
            <person name="Hosoyama A."/>
            <person name="Fukui S."/>
            <person name="Nagai Y."/>
            <person name="Nishijima K."/>
            <person name="Nakazawa H."/>
            <person name="Takamiya M."/>
            <person name="Masuda S."/>
            <person name="Funahashi T."/>
            <person name="Tanaka T."/>
            <person name="Kudoh Y."/>
            <person name="Yamazaki J."/>
            <person name="Kushida N."/>
            <person name="Oguchi A."/>
            <person name="Aoki K."/>
            <person name="Kubota K."/>
            <person name="Nakamura Y."/>
            <person name="Nomura N."/>
            <person name="Sako Y."/>
            <person name="Kikuchi H."/>
        </authorList>
    </citation>
    <scope>NUCLEOTIDE SEQUENCE [LARGE SCALE GENOMIC DNA]</scope>
    <source>
        <strain>ATCC 700893 / DSM 11879 / JCM 9820 / NBRC 100138 / K1</strain>
    </source>
</reference>
<name>IF5A_AERPE</name>
<sequence>MSVNYATLGDLKKGSYIVIDGEPCRIVEMSRAKTGKHGSAKAHVVAICVFSGQKKSLVAPVDTRVQIPVIEKRLGQVLADMGDMVQIMDLETYDTFEVEKPGGNEEEEQLAAKLQPGVTVEYWLIMGKPKIIRIRSSSS</sequence>
<gene>
    <name type="primary">eif5a</name>
    <name type="ordered locus">APE_2085.1</name>
</gene>
<protein>
    <recommendedName>
        <fullName>Translation initiation factor 5A</fullName>
    </recommendedName>
    <alternativeName>
        <fullName>Hypusine-containing protein</fullName>
    </alternativeName>
    <alternativeName>
        <fullName>eIF-5A</fullName>
    </alternativeName>
</protein>